<proteinExistence type="inferred from homology"/>
<gene>
    <name evidence="1" type="primary">nhaB</name>
    <name type="ordered locus">SNSL254_A1944</name>
</gene>
<evidence type="ECO:0000255" key="1">
    <source>
        <dbReference type="HAMAP-Rule" id="MF_01599"/>
    </source>
</evidence>
<comment type="function">
    <text evidence="1">Na(+)/H(+) antiporter that extrudes sodium in exchange for external protons.</text>
</comment>
<comment type="catalytic activity">
    <reaction evidence="1">
        <text>2 Na(+)(in) + 3 H(+)(out) = 2 Na(+)(out) + 3 H(+)(in)</text>
        <dbReference type="Rhea" id="RHEA:29247"/>
        <dbReference type="ChEBI" id="CHEBI:15378"/>
        <dbReference type="ChEBI" id="CHEBI:29101"/>
    </reaction>
    <physiologicalReaction direction="left-to-right" evidence="1">
        <dbReference type="Rhea" id="RHEA:29248"/>
    </physiologicalReaction>
</comment>
<comment type="subcellular location">
    <subcellularLocation>
        <location evidence="1">Cell inner membrane</location>
        <topology evidence="1">Multi-pass membrane protein</topology>
    </subcellularLocation>
</comment>
<comment type="similarity">
    <text evidence="1">Belongs to the NhaB Na(+)/H(+) (TC 2.A.34) antiporter family.</text>
</comment>
<reference key="1">
    <citation type="journal article" date="2011" name="J. Bacteriol.">
        <title>Comparative genomics of 28 Salmonella enterica isolates: evidence for CRISPR-mediated adaptive sublineage evolution.</title>
        <authorList>
            <person name="Fricke W.F."/>
            <person name="Mammel M.K."/>
            <person name="McDermott P.F."/>
            <person name="Tartera C."/>
            <person name="White D.G."/>
            <person name="Leclerc J.E."/>
            <person name="Ravel J."/>
            <person name="Cebula T.A."/>
        </authorList>
    </citation>
    <scope>NUCLEOTIDE SEQUENCE [LARGE SCALE GENOMIC DNA]</scope>
    <source>
        <strain>SL254</strain>
    </source>
</reference>
<accession>B4SUJ8</accession>
<name>NHAB_SALNS</name>
<organism>
    <name type="scientific">Salmonella newport (strain SL254)</name>
    <dbReference type="NCBI Taxonomy" id="423368"/>
    <lineage>
        <taxon>Bacteria</taxon>
        <taxon>Pseudomonadati</taxon>
        <taxon>Pseudomonadota</taxon>
        <taxon>Gammaproteobacteria</taxon>
        <taxon>Enterobacterales</taxon>
        <taxon>Enterobacteriaceae</taxon>
        <taxon>Salmonella</taxon>
    </lineage>
</organism>
<keyword id="KW-0050">Antiport</keyword>
<keyword id="KW-0997">Cell inner membrane</keyword>
<keyword id="KW-1003">Cell membrane</keyword>
<keyword id="KW-0406">Ion transport</keyword>
<keyword id="KW-0472">Membrane</keyword>
<keyword id="KW-0915">Sodium</keyword>
<keyword id="KW-0739">Sodium transport</keyword>
<keyword id="KW-0812">Transmembrane</keyword>
<keyword id="KW-1133">Transmembrane helix</keyword>
<keyword id="KW-0813">Transport</keyword>
<dbReference type="EMBL" id="CP001113">
    <property type="protein sequence ID" value="ACF63230.1"/>
    <property type="molecule type" value="Genomic_DNA"/>
</dbReference>
<dbReference type="RefSeq" id="WP_000406429.1">
    <property type="nucleotide sequence ID" value="NZ_CCMR01000003.1"/>
</dbReference>
<dbReference type="SMR" id="B4SUJ8"/>
<dbReference type="KEGG" id="see:SNSL254_A1944"/>
<dbReference type="HOGENOM" id="CLU_041110_0_0_6"/>
<dbReference type="Proteomes" id="UP000008824">
    <property type="component" value="Chromosome"/>
</dbReference>
<dbReference type="GO" id="GO:0005886">
    <property type="term" value="C:plasma membrane"/>
    <property type="evidence" value="ECO:0007669"/>
    <property type="project" value="UniProtKB-SubCell"/>
</dbReference>
<dbReference type="GO" id="GO:0015385">
    <property type="term" value="F:sodium:proton antiporter activity"/>
    <property type="evidence" value="ECO:0007669"/>
    <property type="project" value="InterPro"/>
</dbReference>
<dbReference type="HAMAP" id="MF_01599">
    <property type="entry name" value="NhaB"/>
    <property type="match status" value="1"/>
</dbReference>
<dbReference type="InterPro" id="IPR004671">
    <property type="entry name" value="Na+/H+_antiporter_NhaB"/>
</dbReference>
<dbReference type="NCBIfam" id="TIGR00774">
    <property type="entry name" value="NhaB"/>
    <property type="match status" value="1"/>
</dbReference>
<dbReference type="NCBIfam" id="NF007093">
    <property type="entry name" value="PRK09547.1"/>
    <property type="match status" value="1"/>
</dbReference>
<dbReference type="PANTHER" id="PTHR43302:SF1">
    <property type="entry name" value="NA(+)_H(+) ANTIPORTER NHAB"/>
    <property type="match status" value="1"/>
</dbReference>
<dbReference type="PANTHER" id="PTHR43302">
    <property type="entry name" value="TRANSPORTER ARSB-RELATED"/>
    <property type="match status" value="1"/>
</dbReference>
<dbReference type="Pfam" id="PF06450">
    <property type="entry name" value="NhaB"/>
    <property type="match status" value="1"/>
</dbReference>
<sequence length="514" mass="56540">MEISWGRAMWRNFLGQSPDWYKLALLVFLIINPFIFLANPFIAGWLLVAEFIFTLAMALKCYPLLPGGLLAIEAVIIGMTSAAHVREEVAANLEVLLLLMFMVAGIYFMKQLLLFIFTRLLLSIRSKMVLSLAFCVAAAFLSAFLDALTVVAVVISVAVGFYGIYHRVASSRGEENDMLDDSHIDPHYKTVLEQFRGFLRSLMMHAGVGTALGGVMTMVGEPQNLIIAKAAGWHFGDFFLRMSPVTVPVLVCGLLTCMLVEKMRWFGYGETLPEKVRDVLQQFDDQSRKKRTRQDKIKLIVQAVIGVWLVTALALHLAEVGLIGLSVIILATALTGVTDEHAIGKAFTESLPFTALLTVFFSIVAVIIDQHLFAPIIQFVLQASEHAQLTLFYLFNGLLSSISDNVFVGTIYINEAKAAMENGAISLKQFELLAVAINTGTNLPSVATPNGQAAFLFLLTSALAPLIRLSYGRMVWMALPYTIVLTLIGLLCVEFTLAPATEWMTQAGWLATLS</sequence>
<feature type="chain" id="PRO_1000191542" description="Na(+)/H(+) antiporter NhaB">
    <location>
        <begin position="1"/>
        <end position="514"/>
    </location>
</feature>
<feature type="transmembrane region" description="Helical" evidence="1">
    <location>
        <begin position="23"/>
        <end position="43"/>
    </location>
</feature>
<feature type="transmembrane region" description="Helical" evidence="1">
    <location>
        <begin position="63"/>
        <end position="83"/>
    </location>
</feature>
<feature type="transmembrane region" description="Helical" evidence="1">
    <location>
        <begin position="97"/>
        <end position="117"/>
    </location>
</feature>
<feature type="transmembrane region" description="Helical" evidence="1">
    <location>
        <begin position="120"/>
        <end position="140"/>
    </location>
</feature>
<feature type="transmembrane region" description="Helical" evidence="1">
    <location>
        <begin position="144"/>
        <end position="164"/>
    </location>
</feature>
<feature type="transmembrane region" description="Helical" evidence="1">
    <location>
        <begin position="202"/>
        <end position="222"/>
    </location>
</feature>
<feature type="transmembrane region" description="Helical" evidence="1">
    <location>
        <begin position="238"/>
        <end position="258"/>
    </location>
</feature>
<feature type="transmembrane region" description="Helical" evidence="1">
    <location>
        <begin position="303"/>
        <end position="323"/>
    </location>
</feature>
<feature type="transmembrane region" description="Helical" evidence="1">
    <location>
        <begin position="357"/>
        <end position="377"/>
    </location>
</feature>
<feature type="transmembrane region" description="Helical" evidence="1">
    <location>
        <begin position="391"/>
        <end position="411"/>
    </location>
</feature>
<feature type="transmembrane region" description="Helical" evidence="1">
    <location>
        <begin position="447"/>
        <end position="467"/>
    </location>
</feature>
<feature type="transmembrane region" description="Helical" evidence="1">
    <location>
        <begin position="475"/>
        <end position="495"/>
    </location>
</feature>
<protein>
    <recommendedName>
        <fullName evidence="1">Na(+)/H(+) antiporter NhaB</fullName>
    </recommendedName>
    <alternativeName>
        <fullName evidence="1">Sodium/proton antiporter NhaB</fullName>
    </alternativeName>
</protein>